<comment type="function">
    <text evidence="2 3 6 7 9">Component of the glideosome complex, an inner membrane complex structure involved in parasite gliding motility and host cell invasion (PubMed:16321976, PubMed:16750579, PubMed:19576251, PubMed:22479457). During the asexual blood stage, required in schizonts to recruit MTIP and MyoA to the inner membrane complex where they assemble with GAP50 to form the glideosome complex (PubMed:19576251, PubMed:29970464). By regulating the formation of the glideosome, plays an essential role during merozoite invasion of host erythrocytes (PubMed:29970464).</text>
</comment>
<comment type="subunit">
    <text evidence="2 3 6 7">Component of the glideosome complex composed of GAP50, GAP45, MTIP and MyoA; the complex is formed during the late schizont stage and in merozoites (PubMed:16321976, PubMed:19576251, PubMed:22479457). MyoA, MTIP and GAP45 probably form an initial complex in the cytoplasm which is then recruited to the outer face of the inner membrane complex via the interaction with GAP50 (PubMed:16750579). Interacts with GAP50; the interaction is independent of GAP45 phosphorylation status and can also occur independently of the formation of the glideosome complex (PubMed:19576251).</text>
</comment>
<comment type="subcellular location">
    <subcellularLocation>
        <location evidence="2 7 8">Inner membrane complex</location>
        <topology evidence="3">Lipid-anchor</topology>
    </subcellularLocation>
    <text evidence="2 7">Localizes to ring-like structures during the early schizont stage (PubMed:22479457). In fully segmented schizonts, localizes around the periphery of each merozoites (PubMed:22479457). During merozoite invasion of host erythrocytes, localizes to the interface between the merozoite and the erythrocyte membrane (PubMed:16321976).</text>
</comment>
<comment type="developmental stage">
    <text evidence="2 3 4 5 6 7 8">Expressed during the asexual blood stage; expression begins in trophozoites and peaks in schizonts and merozoites (at protein level).</text>
</comment>
<comment type="PTM">
    <text evidence="4 5 6 7 8">Phosphorylated at multiple sites (PubMed:18768477, PubMed:19576251). Phosphorylation increases during the schizont stage and peaks in segmented merozoites (PubMed:18768477). May be phosphorylated by PKB (PubMed:18165240). In schizonts, phosphorylated at Ser-89 and Ser-149 in response to phospholipase C-mediated calcium release (PubMed:22558243). Phosphorylation at Ser-149 begins in early schizonts while phosphorylation at Ser-103 begins in late schizonts (PubMed:22558243). Phosphorylation at Ser-89, Ser-103 and Ser-149 appears to be dispensable for GAP45 inner membrane complex localization or GAP45 inclusion in the glideosome complex (PubMed:22479457, PubMed:22558243). Phosphorylation is not required for interaction with GAP50; however, it may regulate the interaction with MTIP and MyoA (PubMed:19576251).</text>
</comment>
<comment type="PTM">
    <text evidence="3 12">N-myristoylated by NMT (PubMed:16750579). N-myristoylation may contribute to the targeting of GAP45 to the inner membrane complex with the subsequent palmitoylation strengthening the interaction with the membrane (Probable).</text>
</comment>
<comment type="PTM">
    <text evidence="3 12">Palmitoylated (PubMed:16750579). Palmitoylation appears to follow N-myristoylation and may strengthen the interaction with the inner membrane complex (Probable).</text>
</comment>
<comment type="disruption phenotype">
    <text evidence="9">Schizonts develop at the same rate as wild type parasites and are morphologically normal at the end of cycle 0 (PubMed:29970464). However, proliferation is impaired during the subsequent cycle (PubMed:29970464). Expression levels of MyoA and MTIP are severely reduced (PubMed:29970464). Expression levels and subcellular location of GAP50 is not affected (PubMed:29970464). No visible defects in intracellular membrane complex development or morphology in the intracellular merozoites (PubMed:29970464). No defect in parasite egress from host erythrocytes (PubMed:29970464). Impaired invasion of host erythrocytes; merozoites bind to erythrocytes but do not induce surface deformation of the erythrocyte and fail to form rings (PubMed:29970464). Microneme discharge is normal (PubMed:29970464).</text>
</comment>
<accession>Q8I5I8</accession>
<name>GAP45_PLAF7</name>
<evidence type="ECO:0000256" key="1">
    <source>
        <dbReference type="SAM" id="MobiDB-lite"/>
    </source>
</evidence>
<evidence type="ECO:0000269" key="2">
    <source>
    </source>
</evidence>
<evidence type="ECO:0000269" key="3">
    <source>
    </source>
</evidence>
<evidence type="ECO:0000269" key="4">
    <source>
    </source>
</evidence>
<evidence type="ECO:0000269" key="5">
    <source>
    </source>
</evidence>
<evidence type="ECO:0000269" key="6">
    <source>
    </source>
</evidence>
<evidence type="ECO:0000269" key="7">
    <source>
    </source>
</evidence>
<evidence type="ECO:0000269" key="8">
    <source>
    </source>
</evidence>
<evidence type="ECO:0000269" key="9">
    <source>
    </source>
</evidence>
<evidence type="ECO:0000303" key="10">
    <source>
    </source>
</evidence>
<evidence type="ECO:0000305" key="11"/>
<evidence type="ECO:0000305" key="12">
    <source>
    </source>
</evidence>
<evidence type="ECO:0000305" key="13">
    <source>
    </source>
</evidence>
<evidence type="ECO:0000312" key="14">
    <source>
        <dbReference type="EMBL" id="CZT99386.1"/>
    </source>
</evidence>
<evidence type="ECO:0000312" key="15">
    <source>
        <dbReference type="Proteomes" id="UP000001450"/>
    </source>
</evidence>
<sequence>MGNKCSRSKVKEPKRKDIDELAERENLKKQSEEIIEEKPEEVVEQVEETHEEPLEQEQELDEQKIEEEEEEPEQVPKEEIDYATQENKSFEEKHLEDLERSNSDIYSESQKFDNASDKLETGTQLTLSTEATGAVQQITKLSEPAHEESIYFTYRSVTPCDMNKLDETAKVFSRRCGCDLGERHDENACKICRKIDLSDTPLLS</sequence>
<feature type="initiator methionine" description="Removed" evidence="12">
    <location>
        <position position="1"/>
    </location>
</feature>
<feature type="chain" id="PRO_0000457348" description="Glideosome-associated protein 45">
    <location>
        <begin position="2"/>
        <end position="204"/>
    </location>
</feature>
<feature type="region of interest" description="Disordered" evidence="1">
    <location>
        <begin position="1"/>
        <end position="86"/>
    </location>
</feature>
<feature type="region of interest" description="Targets GAP45 to the cell membrane; however, dispensable for the formation of the glideosome complex and the association with the inner membrane complex" evidence="7">
    <location>
        <begin position="2"/>
        <end position="29"/>
    </location>
</feature>
<feature type="compositionally biased region" description="Basic and acidic residues" evidence="1">
    <location>
        <begin position="9"/>
        <end position="53"/>
    </location>
</feature>
<feature type="compositionally biased region" description="Acidic residues" evidence="1">
    <location>
        <begin position="54"/>
        <end position="73"/>
    </location>
</feature>
<feature type="modified residue" description="Phosphoserine; by CPK10" evidence="5 7 8">
    <location>
        <position position="89"/>
    </location>
</feature>
<feature type="modified residue" description="Phosphoserine; by CPK10 and PKB" evidence="7 8">
    <location>
        <position position="103"/>
    </location>
</feature>
<feature type="modified residue" description="Phosphoserine; by CPK10" evidence="13">
    <location>
        <position position="149"/>
    </location>
</feature>
<feature type="lipid moiety-binding region" description="N-myristoyl glycine" evidence="12">
    <location>
        <position position="2"/>
    </location>
</feature>
<feature type="mutagenesis site" description="No effect on GAP45 phosphorylation levels." evidence="7">
    <original>T</original>
    <variation>A</variation>
    <location>
        <position position="84"/>
    </location>
</feature>
<feature type="mutagenesis site" description="No effect on GAP45 phosphorylation levels. Severe reduction in GAP45 phosphorylation levels; when associated with A-103. Reduces phosphorylation by CDPK1." evidence="7 8">
    <original>S</original>
    <variation>A</variation>
    <location>
        <position position="89"/>
    </location>
</feature>
<feature type="mutagenesis site" description="Severe reduction in GAP45 phosphorylation levels. Further reduction in GAP45 phosphorylation levels; when associated with A-103. Loss of phosphorylation by PKB. Reduces phosphorylation by CDPK1." evidence="7 8">
    <original>S</original>
    <variation>A</variation>
    <location>
        <position position="103"/>
    </location>
</feature>
<feature type="mutagenesis site" description="No effect on GAP45 phosphorylation by CDPK1." evidence="8">
    <original>S</original>
    <variation>A</variation>
    <location>
        <position position="149"/>
    </location>
</feature>
<gene>
    <name evidence="10" type="primary">GAP45</name>
    <name evidence="14" type="ORF">PF3D7_1222700</name>
</gene>
<proteinExistence type="evidence at protein level"/>
<keyword id="KW-0449">Lipoprotein</keyword>
<keyword id="KW-0472">Membrane</keyword>
<keyword id="KW-0519">Myristate</keyword>
<keyword id="KW-0564">Palmitate</keyword>
<keyword id="KW-0597">Phosphoprotein</keyword>
<keyword id="KW-1185">Reference proteome</keyword>
<reference evidence="15" key="1">
    <citation type="journal article" date="2002" name="Nature">
        <title>Genome sequence of the human malaria parasite Plasmodium falciparum.</title>
        <authorList>
            <person name="Gardner M.J."/>
            <person name="Hall N."/>
            <person name="Fung E."/>
            <person name="White O."/>
            <person name="Berriman M."/>
            <person name="Hyman R.W."/>
            <person name="Carlton J.M."/>
            <person name="Pain A."/>
            <person name="Nelson K.E."/>
            <person name="Bowman S."/>
            <person name="Paulsen I.T."/>
            <person name="James K.D."/>
            <person name="Eisen J.A."/>
            <person name="Rutherford K.M."/>
            <person name="Salzberg S.L."/>
            <person name="Craig A."/>
            <person name="Kyes S."/>
            <person name="Chan M.-S."/>
            <person name="Nene V."/>
            <person name="Shallom S.J."/>
            <person name="Suh B."/>
            <person name="Peterson J."/>
            <person name="Angiuoli S."/>
            <person name="Pertea M."/>
            <person name="Allen J."/>
            <person name="Selengut J."/>
            <person name="Haft D."/>
            <person name="Mather M.W."/>
            <person name="Vaidya A.B."/>
            <person name="Martin D.M.A."/>
            <person name="Fairlamb A.H."/>
            <person name="Fraunholz M.J."/>
            <person name="Roos D.S."/>
            <person name="Ralph S.A."/>
            <person name="McFadden G.I."/>
            <person name="Cummings L.M."/>
            <person name="Subramanian G.M."/>
            <person name="Mungall C."/>
            <person name="Venter J.C."/>
            <person name="Carucci D.J."/>
            <person name="Hoffman S.L."/>
            <person name="Newbold C."/>
            <person name="Davis R.W."/>
            <person name="Fraser C.M."/>
            <person name="Barrell B.G."/>
        </authorList>
    </citation>
    <scope>NUCLEOTIDE SEQUENCE [LARGE SCALE GENOMIC DNA]</scope>
    <source>
        <strain evidence="15">3D7</strain>
    </source>
</reference>
<reference evidence="11" key="2">
    <citation type="journal article" date="2006" name="J. Biol. Chem.">
        <title>A conserved molecular motor drives cell invasion and gliding motility across malaria life cycle stages and other apicomplexan parasites.</title>
        <authorList>
            <person name="Baum J."/>
            <person name="Richard D."/>
            <person name="Healer J."/>
            <person name="Rug M."/>
            <person name="Krnajski Z."/>
            <person name="Gilberger T.W."/>
            <person name="Green J.L."/>
            <person name="Holder A.A."/>
            <person name="Cowman A.F."/>
        </authorList>
    </citation>
    <scope>FUNCTION</scope>
    <scope>IDENTIFICATION IN THE GLIDEOSOME COMPLEX</scope>
    <scope>SUBCELLULAR LOCATION</scope>
    <scope>DEVELOPMENTAL STAGE</scope>
</reference>
<reference evidence="11" key="3">
    <citation type="journal article" date="2006" name="Mol. Biochem. Parasitol.">
        <title>Dual acylation of the 45 kDa gliding-associated protein (GAP45) in Plasmodium falciparum merozoites.</title>
        <authorList>
            <person name="Rees-Channer R.R."/>
            <person name="Martin S.R."/>
            <person name="Green J.L."/>
            <person name="Bowyer P.W."/>
            <person name="Grainger M."/>
            <person name="Molloy J.E."/>
            <person name="Holder A.A."/>
        </authorList>
    </citation>
    <scope>FUNCTION</scope>
    <scope>IDENTIFICATION IN THE GLIDEOSOME COMPLEX</scope>
    <scope>SUBCELLULAR LOCATION</scope>
    <scope>DEVELOPMENTAL STAGE</scope>
    <scope>MYRISTOYLATION AT GLY-2</scope>
    <scope>PALMITOYLATION</scope>
</reference>
<reference evidence="11" key="4">
    <citation type="journal article" date="2008" name="J. Biol. Chem.">
        <title>Role of Ca2+/calmodulin-PfPKB signaling pathway in erythrocyte invasion by Plasmodium falciparum.</title>
        <authorList>
            <person name="Vaid A."/>
            <person name="Thomas D.C."/>
            <person name="Sharma P."/>
        </authorList>
    </citation>
    <scope>DEVELOPMENTAL STAGE</scope>
    <scope>PHOSPHORYLATION</scope>
</reference>
<reference evidence="11" key="5">
    <citation type="journal article" date="2008" name="J. Biol. Chem.">
        <title>The motor complex of Plasmodium falciparum: phosphorylation by a calcium-dependent protein kinase.</title>
        <authorList>
            <person name="Green J.L."/>
            <person name="Rees-Channer R.R."/>
            <person name="Howell S.A."/>
            <person name="Martin S.R."/>
            <person name="Knuepfer E."/>
            <person name="Taylor H.M."/>
            <person name="Grainger M."/>
            <person name="Holder A.A."/>
        </authorList>
    </citation>
    <scope>DEVELOPMENTAL STAGE</scope>
    <scope>PHOSPHORYLATION AT SER-89</scope>
</reference>
<reference evidence="11" key="6">
    <citation type="journal article" date="2009" name="Mol. Biochem. Parasitol.">
        <title>Effects of calcium signaling on Plasmodium falciparum erythrocyte invasion and post-translational modification of gliding-associated protein 45 (PfGAP45).</title>
        <authorList>
            <person name="Jones M.L."/>
            <person name="Cottingham C."/>
            <person name="Rayner J.C."/>
        </authorList>
    </citation>
    <scope>FUNCTION</scope>
    <scope>IDENTIFICATION IN THE GLIDEOSOME COMPLEX</scope>
    <scope>INTERACTION WITH GAP50</scope>
    <scope>DEVELOPMENTAL STAGE</scope>
    <scope>PHOSPHORYLATION</scope>
</reference>
<reference evidence="11" key="7">
    <citation type="journal article" date="2012" name="PLoS ONE">
        <title>Subcellular location, phosphorylation and assembly into the motor complex of GAP45 during Plasmodium falciparum schizont development.</title>
        <authorList>
            <person name="Ridzuan M.A."/>
            <person name="Moon R.W."/>
            <person name="Knuepfer E."/>
            <person name="Black S."/>
            <person name="Holder A.A."/>
            <person name="Green J.L."/>
        </authorList>
    </citation>
    <scope>FUNCTION</scope>
    <scope>IDENTIFICATION IN THE GLIDEOSOME COMPLEX</scope>
    <scope>SUBCELLULAR LOCATION</scope>
    <scope>DEVELOPMENTAL STAGE</scope>
    <scope>PHOSPHORYLATION AT SER-89 AND SER-103</scope>
    <scope>MUTAGENESIS OF THR-84; SER-89 AND SER-103</scope>
</reference>
<reference evidence="11" key="8">
    <citation type="journal article" date="2012" name="PLoS ONE">
        <title>Regulation of Plasmodium falciparum glideosome associated protein 45 (PfGAP45) phosphorylation.</title>
        <authorList>
            <person name="Thomas D.C."/>
            <person name="Ahmed A."/>
            <person name="Gilberger T.W."/>
            <person name="Sharma P."/>
        </authorList>
    </citation>
    <scope>SUBCELLULAR LOCATION</scope>
    <scope>DEVELOPMENTAL STAGE</scope>
    <scope>PHOSPHORYLATION AT SER-89; SER-103 AND SER-149</scope>
    <scope>MUTAGENESIS OF SER-89; SER-103 AND SER-149</scope>
</reference>
<reference evidence="11" key="9">
    <citation type="journal article" date="2018" name="MBio">
        <title>The Actinomyosin Motor Drives Malaria Parasite Red Blood Cell Invasion but Not Egress.</title>
        <authorList>
            <person name="Perrin A.J."/>
            <person name="Collins C.R."/>
            <person name="Russell M.R.G."/>
            <person name="Collinson L.M."/>
            <person name="Baker D.A."/>
            <person name="Blackman M.J."/>
        </authorList>
    </citation>
    <scope>FUNCTION</scope>
    <scope>DISRUPTION PHENOTYPE</scope>
</reference>
<protein>
    <recommendedName>
        <fullName evidence="10">Glideosome-associated protein 45</fullName>
        <shortName evidence="10">PfGAP45</shortName>
    </recommendedName>
</protein>
<organism evidence="15">
    <name type="scientific">Plasmodium falciparum (isolate 3D7)</name>
    <dbReference type="NCBI Taxonomy" id="36329"/>
    <lineage>
        <taxon>Eukaryota</taxon>
        <taxon>Sar</taxon>
        <taxon>Alveolata</taxon>
        <taxon>Apicomplexa</taxon>
        <taxon>Aconoidasida</taxon>
        <taxon>Haemosporida</taxon>
        <taxon>Plasmodiidae</taxon>
        <taxon>Plasmodium</taxon>
        <taxon>Plasmodium (Laverania)</taxon>
    </lineage>
</organism>
<dbReference type="EMBL" id="LN999947">
    <property type="protein sequence ID" value="CZT99386.1"/>
    <property type="molecule type" value="Genomic_DNA"/>
</dbReference>
<dbReference type="RefSeq" id="XP_001350624.1">
    <property type="nucleotide sequence ID" value="XM_001350588.1"/>
</dbReference>
<dbReference type="FunCoup" id="Q8I5I8">
    <property type="interactions" value="11"/>
</dbReference>
<dbReference type="IntAct" id="Q8I5I8">
    <property type="interactions" value="1"/>
</dbReference>
<dbReference type="STRING" id="36329.Q8I5I8"/>
<dbReference type="iPTMnet" id="Q8I5I8"/>
<dbReference type="SwissPalm" id="Q8I5I8"/>
<dbReference type="PaxDb" id="5833-PFL1090w"/>
<dbReference type="PRIDE" id="Q8I5I8"/>
<dbReference type="EnsemblProtists" id="CZT99386">
    <property type="protein sequence ID" value="CZT99386"/>
    <property type="gene ID" value="PF3D7_1222700"/>
</dbReference>
<dbReference type="GeneID" id="811270"/>
<dbReference type="KEGG" id="pfa:PF3D7_1222700"/>
<dbReference type="VEuPathDB" id="PlasmoDB:PF3D7_1222700"/>
<dbReference type="HOGENOM" id="CLU_1450380_0_0_1"/>
<dbReference type="InParanoid" id="Q8I5I8"/>
<dbReference type="OMA" id="SKRCGCD"/>
<dbReference type="OrthoDB" id="377174at2759"/>
<dbReference type="PhylomeDB" id="Q8I5I8"/>
<dbReference type="Proteomes" id="UP000001450">
    <property type="component" value="Chromosome 12"/>
</dbReference>
<dbReference type="GO" id="GO:0019898">
    <property type="term" value="C:extrinsic component of membrane"/>
    <property type="evidence" value="ECO:0000314"/>
    <property type="project" value="GeneDB"/>
</dbReference>
<dbReference type="GO" id="GO:0160055">
    <property type="term" value="C:glideosome"/>
    <property type="evidence" value="ECO:0000314"/>
    <property type="project" value="UniProtKB"/>
</dbReference>
<dbReference type="GO" id="GO:0033644">
    <property type="term" value="C:host cell membrane"/>
    <property type="evidence" value="ECO:0000314"/>
    <property type="project" value="GeneDB"/>
</dbReference>
<dbReference type="GO" id="GO:0070258">
    <property type="term" value="C:inner membrane pellicle complex"/>
    <property type="evidence" value="ECO:0000314"/>
    <property type="project" value="GeneDB"/>
</dbReference>